<reference key="1">
    <citation type="submission" date="2004-03" db="EMBL/GenBank/DDBJ databases">
        <title>Yeast two hybrid screen of sheep endometrium cDNA library.</title>
        <authorList>
            <person name="Wang S.-Z."/>
            <person name="Roberts R.M."/>
        </authorList>
    </citation>
    <scope>NUCLEOTIDE SEQUENCE [MRNA]</scope>
</reference>
<protein>
    <recommendedName>
        <fullName evidence="4">Small ribosomal subunit protein eS26</fullName>
    </recommendedName>
    <alternativeName>
        <fullName>40S ribosomal protein S26</fullName>
    </alternativeName>
</protein>
<keyword id="KW-0963">Cytoplasm</keyword>
<keyword id="KW-0256">Endoplasmic reticulum</keyword>
<keyword id="KW-0597">Phosphoprotein</keyword>
<keyword id="KW-1185">Reference proteome</keyword>
<keyword id="KW-0687">Ribonucleoprotein</keyword>
<keyword id="KW-0689">Ribosomal protein</keyword>
<dbReference type="EMBL" id="AY563024">
    <property type="protein sequence ID" value="AAS72377.1"/>
    <property type="molecule type" value="mRNA"/>
</dbReference>
<dbReference type="RefSeq" id="NP_001009435.1">
    <property type="nucleotide sequence ID" value="NM_001009435.1"/>
</dbReference>
<dbReference type="SMR" id="Q6Q312"/>
<dbReference type="STRING" id="9940.ENSOARP00000020957"/>
<dbReference type="PaxDb" id="9940-ENSOARP00000020957"/>
<dbReference type="GeneID" id="443468"/>
<dbReference type="KEGG" id="oas:443468"/>
<dbReference type="CTD" id="6231"/>
<dbReference type="eggNOG" id="KOG1768">
    <property type="taxonomic scope" value="Eukaryota"/>
</dbReference>
<dbReference type="OrthoDB" id="10262653at2759"/>
<dbReference type="Proteomes" id="UP000002356">
    <property type="component" value="Unplaced"/>
</dbReference>
<dbReference type="GO" id="GO:0098556">
    <property type="term" value="C:cytoplasmic side of rough endoplasmic reticulum membrane"/>
    <property type="evidence" value="ECO:0000250"/>
    <property type="project" value="UniProtKB"/>
</dbReference>
<dbReference type="GO" id="GO:0022627">
    <property type="term" value="C:cytosolic small ribosomal subunit"/>
    <property type="evidence" value="ECO:0000250"/>
    <property type="project" value="UniProtKB"/>
</dbReference>
<dbReference type="GO" id="GO:0005840">
    <property type="term" value="C:ribosome"/>
    <property type="evidence" value="ECO:0000250"/>
    <property type="project" value="UniProtKB"/>
</dbReference>
<dbReference type="GO" id="GO:0003729">
    <property type="term" value="F:mRNA binding"/>
    <property type="evidence" value="ECO:0007669"/>
    <property type="project" value="TreeGrafter"/>
</dbReference>
<dbReference type="GO" id="GO:0003735">
    <property type="term" value="F:structural constituent of ribosome"/>
    <property type="evidence" value="ECO:0007669"/>
    <property type="project" value="InterPro"/>
</dbReference>
<dbReference type="GO" id="GO:0002181">
    <property type="term" value="P:cytoplasmic translation"/>
    <property type="evidence" value="ECO:0000250"/>
    <property type="project" value="UniProtKB"/>
</dbReference>
<dbReference type="FunFam" id="3.30.1740.20:FF:000001">
    <property type="entry name" value="40S ribosomal protein S26"/>
    <property type="match status" value="1"/>
</dbReference>
<dbReference type="Gene3D" id="3.30.1740.20">
    <property type="entry name" value="Ribosomal protein S26e"/>
    <property type="match status" value="1"/>
</dbReference>
<dbReference type="InterPro" id="IPR000892">
    <property type="entry name" value="Ribosomal_eS26"/>
</dbReference>
<dbReference type="InterPro" id="IPR047864">
    <property type="entry name" value="Ribosomal_eS26_CS"/>
</dbReference>
<dbReference type="InterPro" id="IPR038551">
    <property type="entry name" value="Ribosomal_eS26_sf"/>
</dbReference>
<dbReference type="PANTHER" id="PTHR12538">
    <property type="entry name" value="40S RIBOSOMAL PROTEIN S26"/>
    <property type="match status" value="1"/>
</dbReference>
<dbReference type="PANTHER" id="PTHR12538:SF7">
    <property type="entry name" value="SMALL RIBOSOMAL SUBUNIT PROTEIN ES26-RELATED"/>
    <property type="match status" value="1"/>
</dbReference>
<dbReference type="Pfam" id="PF01283">
    <property type="entry name" value="Ribosomal_S26e"/>
    <property type="match status" value="1"/>
</dbReference>
<dbReference type="PROSITE" id="PS00733">
    <property type="entry name" value="RIBOSOMAL_S26E"/>
    <property type="match status" value="1"/>
</dbReference>
<organism>
    <name type="scientific">Ovis aries</name>
    <name type="common">Sheep</name>
    <dbReference type="NCBI Taxonomy" id="9940"/>
    <lineage>
        <taxon>Eukaryota</taxon>
        <taxon>Metazoa</taxon>
        <taxon>Chordata</taxon>
        <taxon>Craniata</taxon>
        <taxon>Vertebrata</taxon>
        <taxon>Euteleostomi</taxon>
        <taxon>Mammalia</taxon>
        <taxon>Eutheria</taxon>
        <taxon>Laurasiatheria</taxon>
        <taxon>Artiodactyla</taxon>
        <taxon>Ruminantia</taxon>
        <taxon>Pecora</taxon>
        <taxon>Bovidae</taxon>
        <taxon>Caprinae</taxon>
        <taxon>Ovis</taxon>
    </lineage>
</organism>
<feature type="chain" id="PRO_0000204515" description="Small ribosomal subunit protein eS26">
    <location>
        <begin position="1"/>
        <end position="115"/>
    </location>
</feature>
<feature type="region of interest" description="Disordered" evidence="3">
    <location>
        <begin position="85"/>
        <end position="115"/>
    </location>
</feature>
<feature type="compositionally biased region" description="Basic and acidic residues" evidence="3">
    <location>
        <begin position="87"/>
        <end position="97"/>
    </location>
</feature>
<feature type="modified residue" description="Phosphoserine" evidence="2">
    <location>
        <position position="54"/>
    </location>
</feature>
<accession>Q6Q312</accession>
<evidence type="ECO:0000250" key="1">
    <source>
        <dbReference type="UniProtKB" id="P49171"/>
    </source>
</evidence>
<evidence type="ECO:0000250" key="2">
    <source>
        <dbReference type="UniProtKB" id="P62854"/>
    </source>
</evidence>
<evidence type="ECO:0000256" key="3">
    <source>
        <dbReference type="SAM" id="MobiDB-lite"/>
    </source>
</evidence>
<evidence type="ECO:0000305" key="4"/>
<name>RS26_SHEEP</name>
<proteinExistence type="inferred from homology"/>
<comment type="function">
    <text evidence="2">Component of the small ribosomal subunit. The ribosome is a large ribonucleoprotein complex responsible for the synthesis of proteins in the cell.</text>
</comment>
<comment type="subunit">
    <text evidence="1">Component of the 40S small ribosomal subunit.</text>
</comment>
<comment type="subcellular location">
    <subcellularLocation>
        <location evidence="2">Cytoplasm</location>
        <location evidence="2">Cytosol</location>
    </subcellularLocation>
    <subcellularLocation>
        <location evidence="2">Cytoplasm</location>
    </subcellularLocation>
    <subcellularLocation>
        <location evidence="1">Rough endoplasmic reticulum</location>
    </subcellularLocation>
    <text evidence="1 2">Detected on cytosolic polysomes (By similarity). Detected in ribosomes that are associated with the rough endoplasmic reticulum (By similarity).</text>
</comment>
<comment type="similarity">
    <text evidence="4">Belongs to the eukaryotic ribosomal protein eS26 family.</text>
</comment>
<gene>
    <name type="primary">RPS26</name>
</gene>
<sequence>MTKKRRNNGRAKKGRGHVQPIRCTNCARCVPKDKAIKKFVIRNIVEAAAVRDISEAGVFDAYVLPKLYVKLHYCVSCAIHSKVVRNRSREARKDRTPPPRFRPAGAAPRPPPKPM</sequence>